<proteinExistence type="inferred from homology"/>
<feature type="chain" id="PRO_1000010159" description="Ribosomal RNA small subunit methyltransferase G">
    <location>
        <begin position="1"/>
        <end position="239"/>
    </location>
</feature>
<feature type="binding site" evidence="1">
    <location>
        <position position="79"/>
    </location>
    <ligand>
        <name>S-adenosyl-L-methionine</name>
        <dbReference type="ChEBI" id="CHEBI:59789"/>
    </ligand>
</feature>
<feature type="binding site" evidence="1">
    <location>
        <position position="84"/>
    </location>
    <ligand>
        <name>S-adenosyl-L-methionine</name>
        <dbReference type="ChEBI" id="CHEBI:59789"/>
    </ligand>
</feature>
<feature type="binding site" evidence="1">
    <location>
        <begin position="130"/>
        <end position="131"/>
    </location>
    <ligand>
        <name>S-adenosyl-L-methionine</name>
        <dbReference type="ChEBI" id="CHEBI:59789"/>
    </ligand>
</feature>
<feature type="binding site" evidence="1">
    <location>
        <position position="149"/>
    </location>
    <ligand>
        <name>S-adenosyl-L-methionine</name>
        <dbReference type="ChEBI" id="CHEBI:59789"/>
    </ligand>
</feature>
<protein>
    <recommendedName>
        <fullName evidence="1">Ribosomal RNA small subunit methyltransferase G</fullName>
        <ecNumber evidence="1">2.1.1.-</ecNumber>
    </recommendedName>
    <alternativeName>
        <fullName evidence="1">16S rRNA 7-methylguanosine methyltransferase</fullName>
        <shortName evidence="1">16S rRNA m7G methyltransferase</shortName>
    </alternativeName>
</protein>
<name>RSMG_LACDB</name>
<keyword id="KW-0963">Cytoplasm</keyword>
<keyword id="KW-0489">Methyltransferase</keyword>
<keyword id="KW-0698">rRNA processing</keyword>
<keyword id="KW-0949">S-adenosyl-L-methionine</keyword>
<keyword id="KW-0808">Transferase</keyword>
<dbReference type="EC" id="2.1.1.-" evidence="1"/>
<dbReference type="EMBL" id="CP000412">
    <property type="protein sequence ID" value="ABJ59301.1"/>
    <property type="molecule type" value="Genomic_DNA"/>
</dbReference>
<dbReference type="RefSeq" id="WP_003621111.1">
    <property type="nucleotide sequence ID" value="NC_008529.1"/>
</dbReference>
<dbReference type="SMR" id="Q047S1"/>
<dbReference type="KEGG" id="lbu:LBUL_1902"/>
<dbReference type="HOGENOM" id="CLU_065341_0_0_9"/>
<dbReference type="BioCyc" id="LDEL321956:LBUL_RS09005-MONOMER"/>
<dbReference type="GO" id="GO:0005829">
    <property type="term" value="C:cytosol"/>
    <property type="evidence" value="ECO:0007669"/>
    <property type="project" value="TreeGrafter"/>
</dbReference>
<dbReference type="GO" id="GO:0070043">
    <property type="term" value="F:rRNA (guanine-N7-)-methyltransferase activity"/>
    <property type="evidence" value="ECO:0007669"/>
    <property type="project" value="UniProtKB-UniRule"/>
</dbReference>
<dbReference type="CDD" id="cd02440">
    <property type="entry name" value="AdoMet_MTases"/>
    <property type="match status" value="1"/>
</dbReference>
<dbReference type="FunFam" id="3.40.50.150:FF:000041">
    <property type="entry name" value="Ribosomal RNA small subunit methyltransferase G"/>
    <property type="match status" value="1"/>
</dbReference>
<dbReference type="Gene3D" id="3.40.50.150">
    <property type="entry name" value="Vaccinia Virus protein VP39"/>
    <property type="match status" value="1"/>
</dbReference>
<dbReference type="HAMAP" id="MF_00074">
    <property type="entry name" value="16SrRNA_methyltr_G"/>
    <property type="match status" value="1"/>
</dbReference>
<dbReference type="InterPro" id="IPR003682">
    <property type="entry name" value="rRNA_ssu_MeTfrase_G"/>
</dbReference>
<dbReference type="InterPro" id="IPR029063">
    <property type="entry name" value="SAM-dependent_MTases_sf"/>
</dbReference>
<dbReference type="NCBIfam" id="TIGR00138">
    <property type="entry name" value="rsmG_gidB"/>
    <property type="match status" value="1"/>
</dbReference>
<dbReference type="PANTHER" id="PTHR31760">
    <property type="entry name" value="S-ADENOSYL-L-METHIONINE-DEPENDENT METHYLTRANSFERASES SUPERFAMILY PROTEIN"/>
    <property type="match status" value="1"/>
</dbReference>
<dbReference type="PANTHER" id="PTHR31760:SF0">
    <property type="entry name" value="S-ADENOSYL-L-METHIONINE-DEPENDENT METHYLTRANSFERASES SUPERFAMILY PROTEIN"/>
    <property type="match status" value="1"/>
</dbReference>
<dbReference type="Pfam" id="PF02527">
    <property type="entry name" value="GidB"/>
    <property type="match status" value="1"/>
</dbReference>
<dbReference type="PIRSF" id="PIRSF003078">
    <property type="entry name" value="GidB"/>
    <property type="match status" value="1"/>
</dbReference>
<dbReference type="SUPFAM" id="SSF53335">
    <property type="entry name" value="S-adenosyl-L-methionine-dependent methyltransferases"/>
    <property type="match status" value="1"/>
</dbReference>
<evidence type="ECO:0000255" key="1">
    <source>
        <dbReference type="HAMAP-Rule" id="MF_00074"/>
    </source>
</evidence>
<reference key="1">
    <citation type="journal article" date="2006" name="Proc. Natl. Acad. Sci. U.S.A.">
        <title>Comparative genomics of the lactic acid bacteria.</title>
        <authorList>
            <person name="Makarova K.S."/>
            <person name="Slesarev A."/>
            <person name="Wolf Y.I."/>
            <person name="Sorokin A."/>
            <person name="Mirkin B."/>
            <person name="Koonin E.V."/>
            <person name="Pavlov A."/>
            <person name="Pavlova N."/>
            <person name="Karamychev V."/>
            <person name="Polouchine N."/>
            <person name="Shakhova V."/>
            <person name="Grigoriev I."/>
            <person name="Lou Y."/>
            <person name="Rohksar D."/>
            <person name="Lucas S."/>
            <person name="Huang K."/>
            <person name="Goodstein D.M."/>
            <person name="Hawkins T."/>
            <person name="Plengvidhya V."/>
            <person name="Welker D."/>
            <person name="Hughes J."/>
            <person name="Goh Y."/>
            <person name="Benson A."/>
            <person name="Baldwin K."/>
            <person name="Lee J.-H."/>
            <person name="Diaz-Muniz I."/>
            <person name="Dosti B."/>
            <person name="Smeianov V."/>
            <person name="Wechter W."/>
            <person name="Barabote R."/>
            <person name="Lorca G."/>
            <person name="Altermann E."/>
            <person name="Barrangou R."/>
            <person name="Ganesan B."/>
            <person name="Xie Y."/>
            <person name="Rawsthorne H."/>
            <person name="Tamir D."/>
            <person name="Parker C."/>
            <person name="Breidt F."/>
            <person name="Broadbent J.R."/>
            <person name="Hutkins R."/>
            <person name="O'Sullivan D."/>
            <person name="Steele J."/>
            <person name="Unlu G."/>
            <person name="Saier M.H. Jr."/>
            <person name="Klaenhammer T."/>
            <person name="Richardson P."/>
            <person name="Kozyavkin S."/>
            <person name="Weimer B.C."/>
            <person name="Mills D.A."/>
        </authorList>
    </citation>
    <scope>NUCLEOTIDE SEQUENCE [LARGE SCALE GENOMIC DNA]</scope>
    <source>
        <strain>ATCC BAA-365 / Lb-18</strain>
    </source>
</reference>
<sequence>MNPELFAETLSKYNFKLSPVQEQQFKTYFKELVRVNEHVNLTRITDEDEVYLKHFYDSVTPLLLWPEVFAEGAKLCDVGAGAGFPSLPIKILRPDLEVTIVDSLGKRLNFLSDLLEKLGIEGVNLVHGRAEDVGQNPDYREKFDLVTARAVARMSVLSEYCLPLAKVGGKFLALKGPRADEELEDAKSALEKLGGEVVFTRVITLPGSAEVRTLVLVDKVKATPGKYPRQAGTPNRKPL</sequence>
<comment type="function">
    <text evidence="1">Specifically methylates the N7 position of a guanine in 16S rRNA.</text>
</comment>
<comment type="subcellular location">
    <subcellularLocation>
        <location evidence="1">Cytoplasm</location>
    </subcellularLocation>
</comment>
<comment type="similarity">
    <text evidence="1">Belongs to the methyltransferase superfamily. RNA methyltransferase RsmG family.</text>
</comment>
<gene>
    <name evidence="1" type="primary">rsmG</name>
    <name type="ordered locus">LBUL_1902</name>
</gene>
<organism>
    <name type="scientific">Lactobacillus delbrueckii subsp. bulgaricus (strain ATCC BAA-365 / Lb-18)</name>
    <dbReference type="NCBI Taxonomy" id="321956"/>
    <lineage>
        <taxon>Bacteria</taxon>
        <taxon>Bacillati</taxon>
        <taxon>Bacillota</taxon>
        <taxon>Bacilli</taxon>
        <taxon>Lactobacillales</taxon>
        <taxon>Lactobacillaceae</taxon>
        <taxon>Lactobacillus</taxon>
    </lineage>
</organism>
<accession>Q047S1</accession>